<evidence type="ECO:0000255" key="1">
    <source>
        <dbReference type="HAMAP-Rule" id="MF_01309"/>
    </source>
</evidence>
<evidence type="ECO:0000305" key="2"/>
<organism>
    <name type="scientific">Vibrio cholerae serotype O1 (strain ATCC 39315 / El Tor Inaba N16961)</name>
    <dbReference type="NCBI Taxonomy" id="243277"/>
    <lineage>
        <taxon>Bacteria</taxon>
        <taxon>Pseudomonadati</taxon>
        <taxon>Pseudomonadota</taxon>
        <taxon>Gammaproteobacteria</taxon>
        <taxon>Vibrionales</taxon>
        <taxon>Vibrionaceae</taxon>
        <taxon>Vibrio</taxon>
    </lineage>
</organism>
<sequence length="233" mass="25612">MGQKVHPNGIRLGIVKPWNATWFANTKDFADNLDGDFKVRQYLSKELANASLSRIVIERPAKSIRVTIHTARPGVVIGKKGEDVEKLRAAVAKIAGVPAQINIAEVRKPELDGQLVADSIASQLERRVMFRRAMKRAVQNAMRLGAKGIKVEVSGRLGGAEIARSEWYREGRVPLHTLRADIDYATSSAHTTYGVIGVKVWIFKGEILGGMPAATEAAEPKADKPKKQRKGRK</sequence>
<reference key="1">
    <citation type="journal article" date="2000" name="Nature">
        <title>DNA sequence of both chromosomes of the cholera pathogen Vibrio cholerae.</title>
        <authorList>
            <person name="Heidelberg J.F."/>
            <person name="Eisen J.A."/>
            <person name="Nelson W.C."/>
            <person name="Clayton R.A."/>
            <person name="Gwinn M.L."/>
            <person name="Dodson R.J."/>
            <person name="Haft D.H."/>
            <person name="Hickey E.K."/>
            <person name="Peterson J.D."/>
            <person name="Umayam L.A."/>
            <person name="Gill S.R."/>
            <person name="Nelson K.E."/>
            <person name="Read T.D."/>
            <person name="Tettelin H."/>
            <person name="Richardson D.L."/>
            <person name="Ermolaeva M.D."/>
            <person name="Vamathevan J.J."/>
            <person name="Bass S."/>
            <person name="Qin H."/>
            <person name="Dragoi I."/>
            <person name="Sellers P."/>
            <person name="McDonald L.A."/>
            <person name="Utterback T.R."/>
            <person name="Fleischmann R.D."/>
            <person name="Nierman W.C."/>
            <person name="White O."/>
            <person name="Salzberg S.L."/>
            <person name="Smith H.O."/>
            <person name="Colwell R.R."/>
            <person name="Mekalanos J.J."/>
            <person name="Venter J.C."/>
            <person name="Fraser C.M."/>
        </authorList>
    </citation>
    <scope>NUCLEOTIDE SEQUENCE [LARGE SCALE GENOMIC DNA]</scope>
    <source>
        <strain>ATCC 39315 / El Tor Inaba N16961</strain>
    </source>
</reference>
<gene>
    <name evidence="1" type="primary">rpsC</name>
    <name type="ordered locus">VC_2590</name>
</gene>
<name>RS3_VIBCH</name>
<protein>
    <recommendedName>
        <fullName evidence="1">Small ribosomal subunit protein uS3</fullName>
    </recommendedName>
    <alternativeName>
        <fullName evidence="2">30S ribosomal protein S3</fullName>
    </alternativeName>
</protein>
<accession>Q9KNZ0</accession>
<feature type="chain" id="PRO_0000130230" description="Small ribosomal subunit protein uS3">
    <location>
        <begin position="1"/>
        <end position="233"/>
    </location>
</feature>
<feature type="domain" description="KH type-2" evidence="1">
    <location>
        <begin position="39"/>
        <end position="107"/>
    </location>
</feature>
<comment type="function">
    <text evidence="1">Binds the lower part of the 30S subunit head. Binds mRNA in the 70S ribosome, positioning it for translation.</text>
</comment>
<comment type="subunit">
    <text evidence="1">Part of the 30S ribosomal subunit. Forms a tight complex with proteins S10 and S14.</text>
</comment>
<comment type="similarity">
    <text evidence="1">Belongs to the universal ribosomal protein uS3 family.</text>
</comment>
<keyword id="KW-1185">Reference proteome</keyword>
<keyword id="KW-0687">Ribonucleoprotein</keyword>
<keyword id="KW-0689">Ribosomal protein</keyword>
<keyword id="KW-0694">RNA-binding</keyword>
<keyword id="KW-0699">rRNA-binding</keyword>
<dbReference type="EMBL" id="AE003852">
    <property type="protein sequence ID" value="AAF95731.1"/>
    <property type="molecule type" value="Genomic_DNA"/>
</dbReference>
<dbReference type="PIR" id="H82058">
    <property type="entry name" value="H82058"/>
</dbReference>
<dbReference type="RefSeq" id="NP_232218.1">
    <property type="nucleotide sequence ID" value="NC_002505.1"/>
</dbReference>
<dbReference type="RefSeq" id="WP_000529940.1">
    <property type="nucleotide sequence ID" value="NZ_LT906614.1"/>
</dbReference>
<dbReference type="SMR" id="Q9KNZ0"/>
<dbReference type="STRING" id="243277.VC_2590"/>
<dbReference type="DNASU" id="2615607"/>
<dbReference type="EnsemblBacteria" id="AAF95731">
    <property type="protein sequence ID" value="AAF95731"/>
    <property type="gene ID" value="VC_2590"/>
</dbReference>
<dbReference type="GeneID" id="93953123"/>
<dbReference type="KEGG" id="vch:VC_2590"/>
<dbReference type="PATRIC" id="fig|243277.26.peg.2469"/>
<dbReference type="eggNOG" id="COG0092">
    <property type="taxonomic scope" value="Bacteria"/>
</dbReference>
<dbReference type="HOGENOM" id="CLU_058591_0_2_6"/>
<dbReference type="Proteomes" id="UP000000584">
    <property type="component" value="Chromosome 1"/>
</dbReference>
<dbReference type="GO" id="GO:0022627">
    <property type="term" value="C:cytosolic small ribosomal subunit"/>
    <property type="evidence" value="ECO:0000318"/>
    <property type="project" value="GO_Central"/>
</dbReference>
<dbReference type="GO" id="GO:0003729">
    <property type="term" value="F:mRNA binding"/>
    <property type="evidence" value="ECO:0007669"/>
    <property type="project" value="UniProtKB-UniRule"/>
</dbReference>
<dbReference type="GO" id="GO:0019843">
    <property type="term" value="F:rRNA binding"/>
    <property type="evidence" value="ECO:0007669"/>
    <property type="project" value="UniProtKB-UniRule"/>
</dbReference>
<dbReference type="GO" id="GO:0003735">
    <property type="term" value="F:structural constituent of ribosome"/>
    <property type="evidence" value="ECO:0000318"/>
    <property type="project" value="GO_Central"/>
</dbReference>
<dbReference type="GO" id="GO:0006412">
    <property type="term" value="P:translation"/>
    <property type="evidence" value="ECO:0007669"/>
    <property type="project" value="UniProtKB-UniRule"/>
</dbReference>
<dbReference type="CDD" id="cd02412">
    <property type="entry name" value="KH-II_30S_S3"/>
    <property type="match status" value="1"/>
</dbReference>
<dbReference type="FunFam" id="3.30.1140.32:FF:000001">
    <property type="entry name" value="30S ribosomal protein S3"/>
    <property type="match status" value="1"/>
</dbReference>
<dbReference type="FunFam" id="3.30.300.20:FF:000001">
    <property type="entry name" value="30S ribosomal protein S3"/>
    <property type="match status" value="1"/>
</dbReference>
<dbReference type="Gene3D" id="3.30.300.20">
    <property type="match status" value="1"/>
</dbReference>
<dbReference type="Gene3D" id="3.30.1140.32">
    <property type="entry name" value="Ribosomal protein S3, C-terminal domain"/>
    <property type="match status" value="1"/>
</dbReference>
<dbReference type="HAMAP" id="MF_01309_B">
    <property type="entry name" value="Ribosomal_uS3_B"/>
    <property type="match status" value="1"/>
</dbReference>
<dbReference type="InterPro" id="IPR004087">
    <property type="entry name" value="KH_dom"/>
</dbReference>
<dbReference type="InterPro" id="IPR015946">
    <property type="entry name" value="KH_dom-like_a/b"/>
</dbReference>
<dbReference type="InterPro" id="IPR004044">
    <property type="entry name" value="KH_dom_type_2"/>
</dbReference>
<dbReference type="InterPro" id="IPR009019">
    <property type="entry name" value="KH_sf_prok-type"/>
</dbReference>
<dbReference type="InterPro" id="IPR036419">
    <property type="entry name" value="Ribosomal_S3_C_sf"/>
</dbReference>
<dbReference type="InterPro" id="IPR005704">
    <property type="entry name" value="Ribosomal_uS3_bac-typ"/>
</dbReference>
<dbReference type="InterPro" id="IPR001351">
    <property type="entry name" value="Ribosomal_uS3_C"/>
</dbReference>
<dbReference type="InterPro" id="IPR018280">
    <property type="entry name" value="Ribosomal_uS3_CS"/>
</dbReference>
<dbReference type="NCBIfam" id="TIGR01009">
    <property type="entry name" value="rpsC_bact"/>
    <property type="match status" value="1"/>
</dbReference>
<dbReference type="PANTHER" id="PTHR11760">
    <property type="entry name" value="30S/40S RIBOSOMAL PROTEIN S3"/>
    <property type="match status" value="1"/>
</dbReference>
<dbReference type="PANTHER" id="PTHR11760:SF19">
    <property type="entry name" value="SMALL RIBOSOMAL SUBUNIT PROTEIN US3C"/>
    <property type="match status" value="1"/>
</dbReference>
<dbReference type="Pfam" id="PF07650">
    <property type="entry name" value="KH_2"/>
    <property type="match status" value="1"/>
</dbReference>
<dbReference type="Pfam" id="PF00189">
    <property type="entry name" value="Ribosomal_S3_C"/>
    <property type="match status" value="1"/>
</dbReference>
<dbReference type="SMART" id="SM00322">
    <property type="entry name" value="KH"/>
    <property type="match status" value="1"/>
</dbReference>
<dbReference type="SUPFAM" id="SSF54814">
    <property type="entry name" value="Prokaryotic type KH domain (KH-domain type II)"/>
    <property type="match status" value="1"/>
</dbReference>
<dbReference type="SUPFAM" id="SSF54821">
    <property type="entry name" value="Ribosomal protein S3 C-terminal domain"/>
    <property type="match status" value="1"/>
</dbReference>
<dbReference type="PROSITE" id="PS50823">
    <property type="entry name" value="KH_TYPE_2"/>
    <property type="match status" value="1"/>
</dbReference>
<dbReference type="PROSITE" id="PS00548">
    <property type="entry name" value="RIBOSOMAL_S3"/>
    <property type="match status" value="1"/>
</dbReference>
<proteinExistence type="inferred from homology"/>